<protein>
    <recommendedName>
        <fullName evidence="1">Phospho-N-acetylmuramoyl-pentapeptide-transferase</fullName>
        <ecNumber evidence="1">2.7.8.13</ecNumber>
    </recommendedName>
    <alternativeName>
        <fullName evidence="1">UDP-MurNAc-pentapeptide phosphotransferase</fullName>
    </alternativeName>
</protein>
<reference key="1">
    <citation type="journal article" date="2008" name="Proc. Natl. Acad. Sci. U.S.A.">
        <title>Complete genome of the uncultured termite group 1 bacteria in a single host protist cell.</title>
        <authorList>
            <person name="Hongoh Y."/>
            <person name="Sharma V.K."/>
            <person name="Prakash T."/>
            <person name="Noda S."/>
            <person name="Taylor T.D."/>
            <person name="Kudo T."/>
            <person name="Sakaki Y."/>
            <person name="Toyoda A."/>
            <person name="Hattori M."/>
            <person name="Ohkuma M."/>
        </authorList>
    </citation>
    <scope>NUCLEOTIDE SEQUENCE [LARGE SCALE GENOMIC DNA]</scope>
</reference>
<proteinExistence type="inferred from homology"/>
<organism>
    <name type="scientific">Endomicrobium trichonymphae</name>
    <dbReference type="NCBI Taxonomy" id="1408204"/>
    <lineage>
        <taxon>Bacteria</taxon>
        <taxon>Pseudomonadati</taxon>
        <taxon>Elusimicrobiota</taxon>
        <taxon>Endomicrobiia</taxon>
        <taxon>Endomicrobiales</taxon>
        <taxon>Endomicrobiaceae</taxon>
        <taxon>Candidatus Endomicrobiellum</taxon>
    </lineage>
</organism>
<gene>
    <name evidence="1" type="primary">mraY</name>
    <name type="ordered locus">TGRD_181</name>
</gene>
<evidence type="ECO:0000255" key="1">
    <source>
        <dbReference type="HAMAP-Rule" id="MF_00038"/>
    </source>
</evidence>
<sequence length="361" mass="39974">MLYHVFYCLSSIFTPFNIFQYITFRAGGAILTSLLICFVAGPCIIEKLENFKIKQIVRTDGPETHLSKNGTPTMGGLLILLSVVASTFLWARLDNRFILWLLTGTLWLGFLGFCDDYLKLKKRDSNGLSAKSKIFGQTVFAAVLAAYLNFFPSNPEFATLVNVPFLKGFFINFSFLYALFVIIVIVGSSNAVNLTDGLDGLAIGNITIVAFSLTLFAYFAGHFQIANYLKIINVSGAGEISIFLFAVVGSSLGFLWYNSHPAEIFMGDTGSLFLGGVLGMVSLFIKQELVLVLLGGVFVIEALSVLIQIFYYRRTGKKVFKMSPLHHHYEMLGLSEMKVTVRFWIAGVILAILSFASLKVR</sequence>
<comment type="function">
    <text evidence="1">Catalyzes the initial step of the lipid cycle reactions in the biosynthesis of the cell wall peptidoglycan: transfers peptidoglycan precursor phospho-MurNAc-pentapeptide from UDP-MurNAc-pentapeptide onto the lipid carrier undecaprenyl phosphate, yielding undecaprenyl-pyrophosphoryl-MurNAc-pentapeptide, known as lipid I.</text>
</comment>
<comment type="catalytic activity">
    <reaction evidence="1">
        <text>UDP-N-acetyl-alpha-D-muramoyl-L-alanyl-gamma-D-glutamyl-meso-2,6-diaminopimeloyl-D-alanyl-D-alanine + di-trans,octa-cis-undecaprenyl phosphate = di-trans,octa-cis-undecaprenyl diphospho-N-acetyl-alpha-D-muramoyl-L-alanyl-D-glutamyl-meso-2,6-diaminopimeloyl-D-alanyl-D-alanine + UMP</text>
        <dbReference type="Rhea" id="RHEA:28386"/>
        <dbReference type="ChEBI" id="CHEBI:57865"/>
        <dbReference type="ChEBI" id="CHEBI:60392"/>
        <dbReference type="ChEBI" id="CHEBI:61386"/>
        <dbReference type="ChEBI" id="CHEBI:61387"/>
        <dbReference type="EC" id="2.7.8.13"/>
    </reaction>
</comment>
<comment type="cofactor">
    <cofactor evidence="1">
        <name>Mg(2+)</name>
        <dbReference type="ChEBI" id="CHEBI:18420"/>
    </cofactor>
</comment>
<comment type="pathway">
    <text evidence="1">Cell wall biogenesis; peptidoglycan biosynthesis.</text>
</comment>
<comment type="subcellular location">
    <subcellularLocation>
        <location evidence="1">Cell membrane</location>
        <topology evidence="1">Multi-pass membrane protein</topology>
    </subcellularLocation>
</comment>
<comment type="similarity">
    <text evidence="1">Belongs to the glycosyltransferase 4 family. MraY subfamily.</text>
</comment>
<keyword id="KW-0131">Cell cycle</keyword>
<keyword id="KW-0132">Cell division</keyword>
<keyword id="KW-1003">Cell membrane</keyword>
<keyword id="KW-0133">Cell shape</keyword>
<keyword id="KW-0961">Cell wall biogenesis/degradation</keyword>
<keyword id="KW-0460">Magnesium</keyword>
<keyword id="KW-0472">Membrane</keyword>
<keyword id="KW-0479">Metal-binding</keyword>
<keyword id="KW-0573">Peptidoglycan synthesis</keyword>
<keyword id="KW-0808">Transferase</keyword>
<keyword id="KW-0812">Transmembrane</keyword>
<keyword id="KW-1133">Transmembrane helix</keyword>
<dbReference type="EC" id="2.7.8.13" evidence="1"/>
<dbReference type="EMBL" id="AP009510">
    <property type="protein sequence ID" value="BAG13664.1"/>
    <property type="molecule type" value="Genomic_DNA"/>
</dbReference>
<dbReference type="RefSeq" id="WP_015423192.1">
    <property type="nucleotide sequence ID" value="NC_020419.1"/>
</dbReference>
<dbReference type="SMR" id="B1GZI2"/>
<dbReference type="STRING" id="471821.TGRD_181"/>
<dbReference type="KEGG" id="rsd:TGRD_181"/>
<dbReference type="PATRIC" id="fig|471821.5.peg.269"/>
<dbReference type="HOGENOM" id="CLU_023982_0_0_0"/>
<dbReference type="UniPathway" id="UPA00219"/>
<dbReference type="Proteomes" id="UP000001691">
    <property type="component" value="Chromosome"/>
</dbReference>
<dbReference type="GO" id="GO:0005886">
    <property type="term" value="C:plasma membrane"/>
    <property type="evidence" value="ECO:0007669"/>
    <property type="project" value="UniProtKB-SubCell"/>
</dbReference>
<dbReference type="GO" id="GO:0046872">
    <property type="term" value="F:metal ion binding"/>
    <property type="evidence" value="ECO:0007669"/>
    <property type="project" value="UniProtKB-KW"/>
</dbReference>
<dbReference type="GO" id="GO:0008963">
    <property type="term" value="F:phospho-N-acetylmuramoyl-pentapeptide-transferase activity"/>
    <property type="evidence" value="ECO:0007669"/>
    <property type="project" value="UniProtKB-UniRule"/>
</dbReference>
<dbReference type="GO" id="GO:0051992">
    <property type="term" value="F:UDP-N-acetylmuramoyl-L-alanyl-D-glutamyl-meso-2,6-diaminopimelyl-D-alanyl-D-alanine:undecaprenyl-phosphate transferase activity"/>
    <property type="evidence" value="ECO:0007669"/>
    <property type="project" value="RHEA"/>
</dbReference>
<dbReference type="GO" id="GO:0051301">
    <property type="term" value="P:cell division"/>
    <property type="evidence" value="ECO:0007669"/>
    <property type="project" value="UniProtKB-KW"/>
</dbReference>
<dbReference type="GO" id="GO:0071555">
    <property type="term" value="P:cell wall organization"/>
    <property type="evidence" value="ECO:0007669"/>
    <property type="project" value="UniProtKB-KW"/>
</dbReference>
<dbReference type="GO" id="GO:0009252">
    <property type="term" value="P:peptidoglycan biosynthetic process"/>
    <property type="evidence" value="ECO:0007669"/>
    <property type="project" value="UniProtKB-UniRule"/>
</dbReference>
<dbReference type="GO" id="GO:0008360">
    <property type="term" value="P:regulation of cell shape"/>
    <property type="evidence" value="ECO:0007669"/>
    <property type="project" value="UniProtKB-KW"/>
</dbReference>
<dbReference type="CDD" id="cd06852">
    <property type="entry name" value="GT_MraY"/>
    <property type="match status" value="1"/>
</dbReference>
<dbReference type="HAMAP" id="MF_00038">
    <property type="entry name" value="MraY"/>
    <property type="match status" value="1"/>
</dbReference>
<dbReference type="InterPro" id="IPR000715">
    <property type="entry name" value="Glycosyl_transferase_4"/>
</dbReference>
<dbReference type="InterPro" id="IPR003524">
    <property type="entry name" value="PNAcMuramoyl-5peptid_Trfase"/>
</dbReference>
<dbReference type="InterPro" id="IPR018480">
    <property type="entry name" value="PNAcMuramoyl-5peptid_Trfase_CS"/>
</dbReference>
<dbReference type="NCBIfam" id="TIGR00445">
    <property type="entry name" value="mraY"/>
    <property type="match status" value="1"/>
</dbReference>
<dbReference type="PANTHER" id="PTHR22926">
    <property type="entry name" value="PHOSPHO-N-ACETYLMURAMOYL-PENTAPEPTIDE-TRANSFERASE"/>
    <property type="match status" value="1"/>
</dbReference>
<dbReference type="PANTHER" id="PTHR22926:SF5">
    <property type="entry name" value="PHOSPHO-N-ACETYLMURAMOYL-PENTAPEPTIDE-TRANSFERASE HOMOLOG"/>
    <property type="match status" value="1"/>
</dbReference>
<dbReference type="Pfam" id="PF00953">
    <property type="entry name" value="Glycos_transf_4"/>
    <property type="match status" value="1"/>
</dbReference>
<dbReference type="Pfam" id="PF10555">
    <property type="entry name" value="MraY_sig1"/>
    <property type="match status" value="1"/>
</dbReference>
<dbReference type="PROSITE" id="PS01347">
    <property type="entry name" value="MRAY_1"/>
    <property type="match status" value="1"/>
</dbReference>
<dbReference type="PROSITE" id="PS01348">
    <property type="entry name" value="MRAY_2"/>
    <property type="match status" value="1"/>
</dbReference>
<accession>B1GZI2</accession>
<feature type="chain" id="PRO_1000090685" description="Phospho-N-acetylmuramoyl-pentapeptide-transferase">
    <location>
        <begin position="1"/>
        <end position="361"/>
    </location>
</feature>
<feature type="transmembrane region" description="Helical" evidence="1">
    <location>
        <begin position="26"/>
        <end position="46"/>
    </location>
</feature>
<feature type="transmembrane region" description="Helical" evidence="1">
    <location>
        <begin position="71"/>
        <end position="91"/>
    </location>
</feature>
<feature type="transmembrane region" description="Helical" evidence="1">
    <location>
        <begin position="97"/>
        <end position="117"/>
    </location>
</feature>
<feature type="transmembrane region" description="Helical" evidence="1">
    <location>
        <begin position="134"/>
        <end position="154"/>
    </location>
</feature>
<feature type="transmembrane region" description="Helical" evidence="1">
    <location>
        <begin position="168"/>
        <end position="188"/>
    </location>
</feature>
<feature type="transmembrane region" description="Helical" evidence="1">
    <location>
        <begin position="200"/>
        <end position="220"/>
    </location>
</feature>
<feature type="transmembrane region" description="Helical" evidence="1">
    <location>
        <begin position="236"/>
        <end position="256"/>
    </location>
</feature>
<feature type="transmembrane region" description="Helical" evidence="1">
    <location>
        <begin position="264"/>
        <end position="284"/>
    </location>
</feature>
<feature type="transmembrane region" description="Helical" evidence="1">
    <location>
        <begin position="290"/>
        <end position="310"/>
    </location>
</feature>
<feature type="transmembrane region" description="Helical" evidence="1">
    <location>
        <begin position="338"/>
        <end position="358"/>
    </location>
</feature>
<name>MRAY_ENDTX</name>